<feature type="chain" id="PRO_1000095530" description="Histidine--tRNA ligase">
    <location>
        <begin position="1"/>
        <end position="446"/>
    </location>
</feature>
<accession>B1YR43</accession>
<protein>
    <recommendedName>
        <fullName evidence="1">Histidine--tRNA ligase</fullName>
        <ecNumber evidence="1">6.1.1.21</ecNumber>
    </recommendedName>
    <alternativeName>
        <fullName evidence="1">Histidyl-tRNA synthetase</fullName>
        <shortName evidence="1">HisRS</shortName>
    </alternativeName>
</protein>
<name>SYH_BURA4</name>
<keyword id="KW-0030">Aminoacyl-tRNA synthetase</keyword>
<keyword id="KW-0067">ATP-binding</keyword>
<keyword id="KW-0963">Cytoplasm</keyword>
<keyword id="KW-0436">Ligase</keyword>
<keyword id="KW-0547">Nucleotide-binding</keyword>
<keyword id="KW-0648">Protein biosynthesis</keyword>
<proteinExistence type="inferred from homology"/>
<dbReference type="EC" id="6.1.1.21" evidence="1"/>
<dbReference type="EMBL" id="CP001025">
    <property type="protein sequence ID" value="ACB64207.1"/>
    <property type="molecule type" value="Genomic_DNA"/>
</dbReference>
<dbReference type="RefSeq" id="WP_006754903.1">
    <property type="nucleotide sequence ID" value="NC_010551.1"/>
</dbReference>
<dbReference type="SMR" id="B1YR43"/>
<dbReference type="GeneID" id="93086044"/>
<dbReference type="KEGG" id="bac:BamMC406_1722"/>
<dbReference type="HOGENOM" id="CLU_025113_1_1_4"/>
<dbReference type="OrthoDB" id="9800814at2"/>
<dbReference type="Proteomes" id="UP000001680">
    <property type="component" value="Chromosome 1"/>
</dbReference>
<dbReference type="GO" id="GO:0005737">
    <property type="term" value="C:cytoplasm"/>
    <property type="evidence" value="ECO:0007669"/>
    <property type="project" value="UniProtKB-SubCell"/>
</dbReference>
<dbReference type="GO" id="GO:0005524">
    <property type="term" value="F:ATP binding"/>
    <property type="evidence" value="ECO:0007669"/>
    <property type="project" value="UniProtKB-UniRule"/>
</dbReference>
<dbReference type="GO" id="GO:0004821">
    <property type="term" value="F:histidine-tRNA ligase activity"/>
    <property type="evidence" value="ECO:0007669"/>
    <property type="project" value="UniProtKB-UniRule"/>
</dbReference>
<dbReference type="GO" id="GO:0006427">
    <property type="term" value="P:histidyl-tRNA aminoacylation"/>
    <property type="evidence" value="ECO:0007669"/>
    <property type="project" value="UniProtKB-UniRule"/>
</dbReference>
<dbReference type="CDD" id="cd00773">
    <property type="entry name" value="HisRS-like_core"/>
    <property type="match status" value="1"/>
</dbReference>
<dbReference type="CDD" id="cd00859">
    <property type="entry name" value="HisRS_anticodon"/>
    <property type="match status" value="1"/>
</dbReference>
<dbReference type="FunFam" id="3.30.930.10:FF:000005">
    <property type="entry name" value="Histidine--tRNA ligase"/>
    <property type="match status" value="1"/>
</dbReference>
<dbReference type="Gene3D" id="3.40.50.800">
    <property type="entry name" value="Anticodon-binding domain"/>
    <property type="match status" value="1"/>
</dbReference>
<dbReference type="Gene3D" id="3.30.930.10">
    <property type="entry name" value="Bira Bifunctional Protein, Domain 2"/>
    <property type="match status" value="1"/>
</dbReference>
<dbReference type="HAMAP" id="MF_00127">
    <property type="entry name" value="His_tRNA_synth"/>
    <property type="match status" value="1"/>
</dbReference>
<dbReference type="InterPro" id="IPR006195">
    <property type="entry name" value="aa-tRNA-synth_II"/>
</dbReference>
<dbReference type="InterPro" id="IPR045864">
    <property type="entry name" value="aa-tRNA-synth_II/BPL/LPL"/>
</dbReference>
<dbReference type="InterPro" id="IPR004154">
    <property type="entry name" value="Anticodon-bd"/>
</dbReference>
<dbReference type="InterPro" id="IPR036621">
    <property type="entry name" value="Anticodon-bd_dom_sf"/>
</dbReference>
<dbReference type="InterPro" id="IPR015807">
    <property type="entry name" value="His-tRNA-ligase"/>
</dbReference>
<dbReference type="InterPro" id="IPR041715">
    <property type="entry name" value="HisRS-like_core"/>
</dbReference>
<dbReference type="InterPro" id="IPR004516">
    <property type="entry name" value="HisRS/HisZ"/>
</dbReference>
<dbReference type="InterPro" id="IPR033656">
    <property type="entry name" value="HisRS_anticodon"/>
</dbReference>
<dbReference type="NCBIfam" id="TIGR00442">
    <property type="entry name" value="hisS"/>
    <property type="match status" value="1"/>
</dbReference>
<dbReference type="PANTHER" id="PTHR43707:SF1">
    <property type="entry name" value="HISTIDINE--TRNA LIGASE, MITOCHONDRIAL-RELATED"/>
    <property type="match status" value="1"/>
</dbReference>
<dbReference type="PANTHER" id="PTHR43707">
    <property type="entry name" value="HISTIDYL-TRNA SYNTHETASE"/>
    <property type="match status" value="1"/>
</dbReference>
<dbReference type="Pfam" id="PF03129">
    <property type="entry name" value="HGTP_anticodon"/>
    <property type="match status" value="1"/>
</dbReference>
<dbReference type="Pfam" id="PF13393">
    <property type="entry name" value="tRNA-synt_His"/>
    <property type="match status" value="1"/>
</dbReference>
<dbReference type="PIRSF" id="PIRSF001549">
    <property type="entry name" value="His-tRNA_synth"/>
    <property type="match status" value="1"/>
</dbReference>
<dbReference type="SUPFAM" id="SSF52954">
    <property type="entry name" value="Class II aaRS ABD-related"/>
    <property type="match status" value="1"/>
</dbReference>
<dbReference type="SUPFAM" id="SSF55681">
    <property type="entry name" value="Class II aaRS and biotin synthetases"/>
    <property type="match status" value="1"/>
</dbReference>
<dbReference type="PROSITE" id="PS50862">
    <property type="entry name" value="AA_TRNA_LIGASE_II"/>
    <property type="match status" value="1"/>
</dbReference>
<organism>
    <name type="scientific">Burkholderia ambifaria (strain MC40-6)</name>
    <dbReference type="NCBI Taxonomy" id="398577"/>
    <lineage>
        <taxon>Bacteria</taxon>
        <taxon>Pseudomonadati</taxon>
        <taxon>Pseudomonadota</taxon>
        <taxon>Betaproteobacteria</taxon>
        <taxon>Burkholderiales</taxon>
        <taxon>Burkholderiaceae</taxon>
        <taxon>Burkholderia</taxon>
        <taxon>Burkholderia cepacia complex</taxon>
    </lineage>
</organism>
<gene>
    <name evidence="1" type="primary">hisS</name>
    <name type="ordered locus">BamMC406_1722</name>
</gene>
<reference key="1">
    <citation type="submission" date="2008-04" db="EMBL/GenBank/DDBJ databases">
        <title>Complete sequence of chromosome 1 of Burkholderia ambifaria MC40-6.</title>
        <authorList>
            <person name="Copeland A."/>
            <person name="Lucas S."/>
            <person name="Lapidus A."/>
            <person name="Glavina del Rio T."/>
            <person name="Dalin E."/>
            <person name="Tice H."/>
            <person name="Pitluck S."/>
            <person name="Chain P."/>
            <person name="Malfatti S."/>
            <person name="Shin M."/>
            <person name="Vergez L."/>
            <person name="Lang D."/>
            <person name="Schmutz J."/>
            <person name="Larimer F."/>
            <person name="Land M."/>
            <person name="Hauser L."/>
            <person name="Kyrpides N."/>
            <person name="Lykidis A."/>
            <person name="Ramette A."/>
            <person name="Konstantinidis K."/>
            <person name="Tiedje J."/>
            <person name="Richardson P."/>
        </authorList>
    </citation>
    <scope>NUCLEOTIDE SEQUENCE [LARGE SCALE GENOMIC DNA]</scope>
    <source>
        <strain>MC40-6</strain>
    </source>
</reference>
<sequence length="446" mass="49671">MTEQKRKIEKLTGVKGMNDILPQDAGLWEFFEATVKSLLRAYGYQNIRTPIVEHTQLFTRGIGEVTDIVEKEMYSFTDALNGENLTMRPENTAAVVRASIEHNMLYDGPKRLWYIGPMFRHERPQRGRYRQFHQVGVEALGFAGPDADAEIIMMCQRLWDDLGLTGIKLEINSLGLAEERAAHRVELIKYLEQFADVLDEDAKRRLYTNPLRVLDTKNPALQEIAQNAPKLIDFLGDESRAHFEGLQRLLLANNIPFKINPRLVRGLDYYNLTVFEWVTDKLGAQGTVAAGGRYDPLIEQLGGKPTAACGWAMGIERILELLKEEDLAPEQEGVDVYVVHQGETAREQAFIAAERLRDTGLDVIFHCSADGAPASFKSQMKRADASGAAFAVIFGEEEVANGTVGVKALRGAGEEGEKNVQQTVPVESLTEFLINAMVASAEDGDD</sequence>
<evidence type="ECO:0000255" key="1">
    <source>
        <dbReference type="HAMAP-Rule" id="MF_00127"/>
    </source>
</evidence>
<comment type="catalytic activity">
    <reaction evidence="1">
        <text>tRNA(His) + L-histidine + ATP = L-histidyl-tRNA(His) + AMP + diphosphate + H(+)</text>
        <dbReference type="Rhea" id="RHEA:17313"/>
        <dbReference type="Rhea" id="RHEA-COMP:9665"/>
        <dbReference type="Rhea" id="RHEA-COMP:9689"/>
        <dbReference type="ChEBI" id="CHEBI:15378"/>
        <dbReference type="ChEBI" id="CHEBI:30616"/>
        <dbReference type="ChEBI" id="CHEBI:33019"/>
        <dbReference type="ChEBI" id="CHEBI:57595"/>
        <dbReference type="ChEBI" id="CHEBI:78442"/>
        <dbReference type="ChEBI" id="CHEBI:78527"/>
        <dbReference type="ChEBI" id="CHEBI:456215"/>
        <dbReference type="EC" id="6.1.1.21"/>
    </reaction>
</comment>
<comment type="subunit">
    <text evidence="1">Homodimer.</text>
</comment>
<comment type="subcellular location">
    <subcellularLocation>
        <location evidence="1">Cytoplasm</location>
    </subcellularLocation>
</comment>
<comment type="similarity">
    <text evidence="1">Belongs to the class-II aminoacyl-tRNA synthetase family.</text>
</comment>